<dbReference type="EC" id="2.4.1.21" evidence="1"/>
<dbReference type="EMBL" id="CP000267">
    <property type="protein sequence ID" value="ABD68264.1"/>
    <property type="molecule type" value="Genomic_DNA"/>
</dbReference>
<dbReference type="RefSeq" id="WP_011462837.1">
    <property type="nucleotide sequence ID" value="NC_007908.1"/>
</dbReference>
<dbReference type="SMR" id="Q221N9"/>
<dbReference type="STRING" id="338969.Rfer_0512"/>
<dbReference type="CAZy" id="GT5">
    <property type="family name" value="Glycosyltransferase Family 5"/>
</dbReference>
<dbReference type="KEGG" id="rfr:Rfer_0512"/>
<dbReference type="eggNOG" id="COG0297">
    <property type="taxonomic scope" value="Bacteria"/>
</dbReference>
<dbReference type="HOGENOM" id="CLU_009583_18_4_4"/>
<dbReference type="OrthoDB" id="9808590at2"/>
<dbReference type="UniPathway" id="UPA00164"/>
<dbReference type="Proteomes" id="UP000008332">
    <property type="component" value="Chromosome"/>
</dbReference>
<dbReference type="GO" id="GO:0005829">
    <property type="term" value="C:cytosol"/>
    <property type="evidence" value="ECO:0007669"/>
    <property type="project" value="TreeGrafter"/>
</dbReference>
<dbReference type="GO" id="GO:0009011">
    <property type="term" value="F:alpha-1,4-glucan glucosyltransferase (ADP-glucose donor) activity"/>
    <property type="evidence" value="ECO:0007669"/>
    <property type="project" value="UniProtKB-UniRule"/>
</dbReference>
<dbReference type="GO" id="GO:0004373">
    <property type="term" value="F:alpha-1,4-glucan glucosyltransferase (UDP-glucose donor) activity"/>
    <property type="evidence" value="ECO:0007669"/>
    <property type="project" value="InterPro"/>
</dbReference>
<dbReference type="GO" id="GO:0005978">
    <property type="term" value="P:glycogen biosynthetic process"/>
    <property type="evidence" value="ECO:0007669"/>
    <property type="project" value="UniProtKB-UniRule"/>
</dbReference>
<dbReference type="CDD" id="cd03791">
    <property type="entry name" value="GT5_Glycogen_synthase_DULL1-like"/>
    <property type="match status" value="1"/>
</dbReference>
<dbReference type="Gene3D" id="3.40.50.2000">
    <property type="entry name" value="Glycogen Phosphorylase B"/>
    <property type="match status" value="2"/>
</dbReference>
<dbReference type="HAMAP" id="MF_00484">
    <property type="entry name" value="Glycogen_synth"/>
    <property type="match status" value="1"/>
</dbReference>
<dbReference type="InterPro" id="IPR011835">
    <property type="entry name" value="GS/SS"/>
</dbReference>
<dbReference type="InterPro" id="IPR013534">
    <property type="entry name" value="Starch_synth_cat_dom"/>
</dbReference>
<dbReference type="NCBIfam" id="TIGR02095">
    <property type="entry name" value="glgA"/>
    <property type="match status" value="1"/>
</dbReference>
<dbReference type="NCBIfam" id="NF001899">
    <property type="entry name" value="PRK00654.1-2"/>
    <property type="match status" value="1"/>
</dbReference>
<dbReference type="PANTHER" id="PTHR45825:SF11">
    <property type="entry name" value="ALPHA AMYLASE DOMAIN-CONTAINING PROTEIN"/>
    <property type="match status" value="1"/>
</dbReference>
<dbReference type="PANTHER" id="PTHR45825">
    <property type="entry name" value="GRANULE-BOUND STARCH SYNTHASE 1, CHLOROPLASTIC/AMYLOPLASTIC"/>
    <property type="match status" value="1"/>
</dbReference>
<dbReference type="Pfam" id="PF13692">
    <property type="entry name" value="Glyco_trans_1_4"/>
    <property type="match status" value="1"/>
</dbReference>
<dbReference type="Pfam" id="PF08323">
    <property type="entry name" value="Glyco_transf_5"/>
    <property type="match status" value="1"/>
</dbReference>
<dbReference type="SUPFAM" id="SSF53756">
    <property type="entry name" value="UDP-Glycosyltransferase/glycogen phosphorylase"/>
    <property type="match status" value="1"/>
</dbReference>
<protein>
    <recommendedName>
        <fullName evidence="1">Glycogen synthase</fullName>
        <ecNumber evidence="1">2.4.1.21</ecNumber>
    </recommendedName>
    <alternativeName>
        <fullName evidence="1">Starch [bacterial glycogen] synthase</fullName>
    </alternativeName>
</protein>
<proteinExistence type="inferred from homology"/>
<comment type="function">
    <text evidence="1">Synthesizes alpha-1,4-glucan chains using ADP-glucose.</text>
</comment>
<comment type="catalytic activity">
    <reaction evidence="1">
        <text>[(1-&gt;4)-alpha-D-glucosyl](n) + ADP-alpha-D-glucose = [(1-&gt;4)-alpha-D-glucosyl](n+1) + ADP + H(+)</text>
        <dbReference type="Rhea" id="RHEA:18189"/>
        <dbReference type="Rhea" id="RHEA-COMP:9584"/>
        <dbReference type="Rhea" id="RHEA-COMP:9587"/>
        <dbReference type="ChEBI" id="CHEBI:15378"/>
        <dbReference type="ChEBI" id="CHEBI:15444"/>
        <dbReference type="ChEBI" id="CHEBI:57498"/>
        <dbReference type="ChEBI" id="CHEBI:456216"/>
        <dbReference type="EC" id="2.4.1.21"/>
    </reaction>
</comment>
<comment type="pathway">
    <text evidence="1">Glycan biosynthesis; glycogen biosynthesis.</text>
</comment>
<comment type="similarity">
    <text evidence="1">Belongs to the glycosyltransferase 1 family. Bacterial/plant glycogen synthase subfamily.</text>
</comment>
<reference key="1">
    <citation type="submission" date="2006-02" db="EMBL/GenBank/DDBJ databases">
        <title>Complete sequence of chromosome of Rhodoferax ferrireducens DSM 15236.</title>
        <authorList>
            <person name="Copeland A."/>
            <person name="Lucas S."/>
            <person name="Lapidus A."/>
            <person name="Barry K."/>
            <person name="Detter J.C."/>
            <person name="Glavina del Rio T."/>
            <person name="Hammon N."/>
            <person name="Israni S."/>
            <person name="Pitluck S."/>
            <person name="Brettin T."/>
            <person name="Bruce D."/>
            <person name="Han C."/>
            <person name="Tapia R."/>
            <person name="Gilna P."/>
            <person name="Kiss H."/>
            <person name="Schmutz J."/>
            <person name="Larimer F."/>
            <person name="Land M."/>
            <person name="Kyrpides N."/>
            <person name="Ivanova N."/>
            <person name="Richardson P."/>
        </authorList>
    </citation>
    <scope>NUCLEOTIDE SEQUENCE [LARGE SCALE GENOMIC DNA]</scope>
    <source>
        <strain>ATCC BAA-621 / DSM 15236 / T118</strain>
    </source>
</reference>
<evidence type="ECO:0000255" key="1">
    <source>
        <dbReference type="HAMAP-Rule" id="MF_00484"/>
    </source>
</evidence>
<keyword id="KW-0320">Glycogen biosynthesis</keyword>
<keyword id="KW-0328">Glycosyltransferase</keyword>
<keyword id="KW-1185">Reference proteome</keyword>
<keyword id="KW-0808">Transferase</keyword>
<name>GLGA_ALBFT</name>
<feature type="chain" id="PRO_0000241797" description="Glycogen synthase">
    <location>
        <begin position="1"/>
        <end position="494"/>
    </location>
</feature>
<feature type="binding site" evidence="1">
    <location>
        <position position="15"/>
    </location>
    <ligand>
        <name>ADP-alpha-D-glucose</name>
        <dbReference type="ChEBI" id="CHEBI:57498"/>
    </ligand>
</feature>
<organism>
    <name type="scientific">Albidiferax ferrireducens (strain ATCC BAA-621 / DSM 15236 / T118)</name>
    <name type="common">Rhodoferax ferrireducens</name>
    <dbReference type="NCBI Taxonomy" id="338969"/>
    <lineage>
        <taxon>Bacteria</taxon>
        <taxon>Pseudomonadati</taxon>
        <taxon>Pseudomonadota</taxon>
        <taxon>Betaproteobacteria</taxon>
        <taxon>Burkholderiales</taxon>
        <taxon>Comamonadaceae</taxon>
        <taxon>Rhodoferax</taxon>
    </lineage>
</organism>
<gene>
    <name evidence="1" type="primary">glgA</name>
    <name type="ordered locus">Rfer_0512</name>
</gene>
<sequence>MKVLYVCTELFPFLKTGGLADVSAGLAPALQAVGCEVRLLLPAFPAIANQALSTRPIASLPAGPMPWGPAPVLPPASLTLATLPGLELPVYLVQAPALYDRPGNPYLGPDGKDWSDNAIRFAALGWAGATLGQGLDPHWRPDVIHCHDWHSGLTPTYVRAFAAAKQATPATVFTIHNLAYQGLFAAAEVTRLGLPKSWFDIDGFEFFGKVSFMKAALRYADRITTVSPTYAREISSEAQGCGLDGLLRERANSLSGILNGVDDLIWNPATDALLPAPYDEHKLQGKTLAKRALQTKFGLEPRANALVFGAVSRLTEQKGLHLLPQVLADMVQRGGQLALLGQGDVALERAFVDAAIRYPGQVGVRIGYDEVTAHAVIAGADVILVPSEFEPCGLTQLYGLRYGTLPLVRRVGGLADTVVDCTLENLDEGSATGFVFDELSPAGLLSAVRRAFVLFRRPDEWLAVQQRGMGLRFDWLASAQHYLAMYQTLRPGAK</sequence>
<accession>Q221N9</accession>